<accession>C3LLL0</accession>
<name>CMOA_VIBCM</name>
<feature type="chain" id="PRO_1000185689" description="Carboxy-S-adenosyl-L-methionine synthase">
    <location>
        <begin position="1"/>
        <end position="246"/>
    </location>
</feature>
<feature type="binding site" evidence="1">
    <location>
        <position position="43"/>
    </location>
    <ligand>
        <name>S-adenosyl-L-methionine</name>
        <dbReference type="ChEBI" id="CHEBI:59789"/>
    </ligand>
</feature>
<feature type="binding site" evidence="1">
    <location>
        <begin position="68"/>
        <end position="70"/>
    </location>
    <ligand>
        <name>S-adenosyl-L-methionine</name>
        <dbReference type="ChEBI" id="CHEBI:59789"/>
    </ligand>
</feature>
<feature type="binding site" evidence="1">
    <location>
        <begin position="93"/>
        <end position="94"/>
    </location>
    <ligand>
        <name>S-adenosyl-L-methionine</name>
        <dbReference type="ChEBI" id="CHEBI:59789"/>
    </ligand>
</feature>
<feature type="binding site" evidence="1">
    <location>
        <begin position="121"/>
        <end position="122"/>
    </location>
    <ligand>
        <name>S-adenosyl-L-methionine</name>
        <dbReference type="ChEBI" id="CHEBI:59789"/>
    </ligand>
</feature>
<feature type="binding site" evidence="1">
    <location>
        <position position="136"/>
    </location>
    <ligand>
        <name>S-adenosyl-L-methionine</name>
        <dbReference type="ChEBI" id="CHEBI:59789"/>
    </ligand>
</feature>
<feature type="binding site" evidence="1">
    <location>
        <position position="203"/>
    </location>
    <ligand>
        <name>S-adenosyl-L-methionine</name>
        <dbReference type="ChEBI" id="CHEBI:59789"/>
    </ligand>
</feature>
<keyword id="KW-0949">S-adenosyl-L-methionine</keyword>
<keyword id="KW-0808">Transferase</keyword>
<reference key="1">
    <citation type="journal article" date="2008" name="PLoS ONE">
        <title>A recalibrated molecular clock and independent origins for the cholera pandemic clones.</title>
        <authorList>
            <person name="Feng L."/>
            <person name="Reeves P.R."/>
            <person name="Lan R."/>
            <person name="Ren Y."/>
            <person name="Gao C."/>
            <person name="Zhou Z."/>
            <person name="Ren Y."/>
            <person name="Cheng J."/>
            <person name="Wang W."/>
            <person name="Wang J."/>
            <person name="Qian W."/>
            <person name="Li D."/>
            <person name="Wang L."/>
        </authorList>
    </citation>
    <scope>NUCLEOTIDE SEQUENCE [LARGE SCALE GENOMIC DNA]</scope>
    <source>
        <strain>M66-2</strain>
    </source>
</reference>
<protein>
    <recommendedName>
        <fullName evidence="1">Carboxy-S-adenosyl-L-methionine synthase</fullName>
        <shortName evidence="1">Cx-SAM synthase</shortName>
        <ecNumber evidence="1">2.1.3.-</ecNumber>
    </recommendedName>
</protein>
<dbReference type="EC" id="2.1.3.-" evidence="1"/>
<dbReference type="EMBL" id="CP001233">
    <property type="protein sequence ID" value="ACP05436.1"/>
    <property type="molecule type" value="Genomic_DNA"/>
</dbReference>
<dbReference type="SMR" id="C3LLL0"/>
<dbReference type="KEGG" id="vcm:VCM66_1119"/>
<dbReference type="HOGENOM" id="CLU_078475_0_0_6"/>
<dbReference type="Proteomes" id="UP000001217">
    <property type="component" value="Chromosome I"/>
</dbReference>
<dbReference type="GO" id="GO:0016743">
    <property type="term" value="F:carboxyl- or carbamoyltransferase activity"/>
    <property type="evidence" value="ECO:0007669"/>
    <property type="project" value="UniProtKB-UniRule"/>
</dbReference>
<dbReference type="GO" id="GO:1904047">
    <property type="term" value="F:S-adenosyl-L-methionine binding"/>
    <property type="evidence" value="ECO:0007669"/>
    <property type="project" value="UniProtKB-UniRule"/>
</dbReference>
<dbReference type="GO" id="GO:0002098">
    <property type="term" value="P:tRNA wobble uridine modification"/>
    <property type="evidence" value="ECO:0007669"/>
    <property type="project" value="InterPro"/>
</dbReference>
<dbReference type="CDD" id="cd02440">
    <property type="entry name" value="AdoMet_MTases"/>
    <property type="match status" value="1"/>
</dbReference>
<dbReference type="Gene3D" id="3.40.50.150">
    <property type="entry name" value="Vaccinia Virus protein VP39"/>
    <property type="match status" value="1"/>
</dbReference>
<dbReference type="HAMAP" id="MF_01589">
    <property type="entry name" value="Cx_SAM_synthase"/>
    <property type="match status" value="1"/>
</dbReference>
<dbReference type="InterPro" id="IPR005271">
    <property type="entry name" value="CmoA"/>
</dbReference>
<dbReference type="InterPro" id="IPR041698">
    <property type="entry name" value="Methyltransf_25"/>
</dbReference>
<dbReference type="InterPro" id="IPR029063">
    <property type="entry name" value="SAM-dependent_MTases_sf"/>
</dbReference>
<dbReference type="NCBIfam" id="TIGR00740">
    <property type="entry name" value="carboxy-S-adenosyl-L-methionine synthase CmoA"/>
    <property type="match status" value="1"/>
</dbReference>
<dbReference type="NCBIfam" id="NF011995">
    <property type="entry name" value="PRK15451.1"/>
    <property type="match status" value="1"/>
</dbReference>
<dbReference type="PANTHER" id="PTHR43861:SF2">
    <property type="entry name" value="CARBOXY-S-ADENOSYL-L-METHIONINE SYNTHASE"/>
    <property type="match status" value="1"/>
</dbReference>
<dbReference type="PANTHER" id="PTHR43861">
    <property type="entry name" value="TRANS-ACONITATE 2-METHYLTRANSFERASE-RELATED"/>
    <property type="match status" value="1"/>
</dbReference>
<dbReference type="Pfam" id="PF13649">
    <property type="entry name" value="Methyltransf_25"/>
    <property type="match status" value="1"/>
</dbReference>
<dbReference type="PIRSF" id="PIRSF006325">
    <property type="entry name" value="MeTrfase_bac"/>
    <property type="match status" value="1"/>
</dbReference>
<dbReference type="SUPFAM" id="SSF53335">
    <property type="entry name" value="S-adenosyl-L-methionine-dependent methyltransferases"/>
    <property type="match status" value="1"/>
</dbReference>
<proteinExistence type="inferred from homology"/>
<evidence type="ECO:0000255" key="1">
    <source>
        <dbReference type="HAMAP-Rule" id="MF_01589"/>
    </source>
</evidence>
<organism>
    <name type="scientific">Vibrio cholerae serotype O1 (strain M66-2)</name>
    <dbReference type="NCBI Taxonomy" id="579112"/>
    <lineage>
        <taxon>Bacteria</taxon>
        <taxon>Pseudomonadati</taxon>
        <taxon>Pseudomonadota</taxon>
        <taxon>Gammaproteobacteria</taxon>
        <taxon>Vibrionales</taxon>
        <taxon>Vibrionaceae</taxon>
        <taxon>Vibrio</taxon>
    </lineage>
</organism>
<sequence>MRSAMNPKDTLFSAPIDKIGDFTFDERVAEVFPDMIQRSVPGYSNIISAIGMLAERFVKPHSKIYDLGCSLGAATLSMRRHIKQEGCQIIAVDNSAAMVERCKLHLNAYRSDTPVQVIEADIRDIAIENASVVVLNFTLQFLAPDDRYALLEKIYAGLRPGGILILSEKFVFSDQEAHELLIDLHHDFKRANGYSELEISQKRSAIENVMRPDSIQTHKQRFATLGFSSFEVWFQCFNFGSMFAIK</sequence>
<comment type="function">
    <text evidence="1">Catalyzes the conversion of S-adenosyl-L-methionine (SAM) to carboxy-S-adenosyl-L-methionine (Cx-SAM).</text>
</comment>
<comment type="catalytic activity">
    <reaction evidence="1">
        <text>prephenate + S-adenosyl-L-methionine = carboxy-S-adenosyl-L-methionine + 3-phenylpyruvate + H2O</text>
        <dbReference type="Rhea" id="RHEA:51692"/>
        <dbReference type="ChEBI" id="CHEBI:15377"/>
        <dbReference type="ChEBI" id="CHEBI:18005"/>
        <dbReference type="ChEBI" id="CHEBI:29934"/>
        <dbReference type="ChEBI" id="CHEBI:59789"/>
        <dbReference type="ChEBI" id="CHEBI:134278"/>
    </reaction>
</comment>
<comment type="subunit">
    <text evidence="1">Homodimer.</text>
</comment>
<comment type="similarity">
    <text evidence="1">Belongs to the class I-like SAM-binding methyltransferase superfamily. Cx-SAM synthase family.</text>
</comment>
<gene>
    <name evidence="1" type="primary">cmoA</name>
    <name type="ordered locus">VCM66_1119</name>
</gene>